<protein>
    <recommendedName>
        <fullName>Putative uncharacterized protein DDB_G0268604</fullName>
    </recommendedName>
</protein>
<keyword id="KW-1185">Reference proteome</keyword>
<organism>
    <name type="scientific">Dictyostelium discoideum</name>
    <name type="common">Social amoeba</name>
    <dbReference type="NCBI Taxonomy" id="44689"/>
    <lineage>
        <taxon>Eukaryota</taxon>
        <taxon>Amoebozoa</taxon>
        <taxon>Evosea</taxon>
        <taxon>Eumycetozoa</taxon>
        <taxon>Dictyostelia</taxon>
        <taxon>Dictyosteliales</taxon>
        <taxon>Dictyosteliaceae</taxon>
        <taxon>Dictyostelium</taxon>
    </lineage>
</organism>
<name>Y6600_DICDI</name>
<gene>
    <name type="ORF">DDB_G0268604</name>
</gene>
<reference key="1">
    <citation type="journal article" date="2005" name="Nature">
        <title>The genome of the social amoeba Dictyostelium discoideum.</title>
        <authorList>
            <person name="Eichinger L."/>
            <person name="Pachebat J.A."/>
            <person name="Gloeckner G."/>
            <person name="Rajandream M.A."/>
            <person name="Sucgang R."/>
            <person name="Berriman M."/>
            <person name="Song J."/>
            <person name="Olsen R."/>
            <person name="Szafranski K."/>
            <person name="Xu Q."/>
            <person name="Tunggal B."/>
            <person name="Kummerfeld S."/>
            <person name="Madera M."/>
            <person name="Konfortov B.A."/>
            <person name="Rivero F."/>
            <person name="Bankier A.T."/>
            <person name="Lehmann R."/>
            <person name="Hamlin N."/>
            <person name="Davies R."/>
            <person name="Gaudet P."/>
            <person name="Fey P."/>
            <person name="Pilcher K."/>
            <person name="Chen G."/>
            <person name="Saunders D."/>
            <person name="Sodergren E.J."/>
            <person name="Davis P."/>
            <person name="Kerhornou A."/>
            <person name="Nie X."/>
            <person name="Hall N."/>
            <person name="Anjard C."/>
            <person name="Hemphill L."/>
            <person name="Bason N."/>
            <person name="Farbrother P."/>
            <person name="Desany B."/>
            <person name="Just E."/>
            <person name="Morio T."/>
            <person name="Rost R."/>
            <person name="Churcher C.M."/>
            <person name="Cooper J."/>
            <person name="Haydock S."/>
            <person name="van Driessche N."/>
            <person name="Cronin A."/>
            <person name="Goodhead I."/>
            <person name="Muzny D.M."/>
            <person name="Mourier T."/>
            <person name="Pain A."/>
            <person name="Lu M."/>
            <person name="Harper D."/>
            <person name="Lindsay R."/>
            <person name="Hauser H."/>
            <person name="James K.D."/>
            <person name="Quiles M."/>
            <person name="Madan Babu M."/>
            <person name="Saito T."/>
            <person name="Buchrieser C."/>
            <person name="Wardroper A."/>
            <person name="Felder M."/>
            <person name="Thangavelu M."/>
            <person name="Johnson D."/>
            <person name="Knights A."/>
            <person name="Loulseged H."/>
            <person name="Mungall K.L."/>
            <person name="Oliver K."/>
            <person name="Price C."/>
            <person name="Quail M.A."/>
            <person name="Urushihara H."/>
            <person name="Hernandez J."/>
            <person name="Rabbinowitsch E."/>
            <person name="Steffen D."/>
            <person name="Sanders M."/>
            <person name="Ma J."/>
            <person name="Kohara Y."/>
            <person name="Sharp S."/>
            <person name="Simmonds M.N."/>
            <person name="Spiegler S."/>
            <person name="Tivey A."/>
            <person name="Sugano S."/>
            <person name="White B."/>
            <person name="Walker D."/>
            <person name="Woodward J.R."/>
            <person name="Winckler T."/>
            <person name="Tanaka Y."/>
            <person name="Shaulsky G."/>
            <person name="Schleicher M."/>
            <person name="Weinstock G.M."/>
            <person name="Rosenthal A."/>
            <person name="Cox E.C."/>
            <person name="Chisholm R.L."/>
            <person name="Gibbs R.A."/>
            <person name="Loomis W.F."/>
            <person name="Platzer M."/>
            <person name="Kay R.R."/>
            <person name="Williams J.G."/>
            <person name="Dear P.H."/>
            <person name="Noegel A.A."/>
            <person name="Barrell B.G."/>
            <person name="Kuspa A."/>
        </authorList>
    </citation>
    <scope>NUCLEOTIDE SEQUENCE [LARGE SCALE GENOMIC DNA]</scope>
    <source>
        <strain>AX4</strain>
    </source>
</reference>
<feature type="chain" id="PRO_0000348110" description="Putative uncharacterized protein DDB_G0268604">
    <location>
        <begin position="1"/>
        <end position="63"/>
    </location>
</feature>
<proteinExistence type="predicted"/>
<accession>Q55F67</accession>
<dbReference type="EMBL" id="AAFI02000003">
    <property type="protein sequence ID" value="EAL73755.1"/>
    <property type="molecule type" value="Genomic_DNA"/>
</dbReference>
<dbReference type="RefSeq" id="XP_647666.1">
    <property type="nucleotide sequence ID" value="XM_642574.1"/>
</dbReference>
<dbReference type="SMR" id="Q55F67"/>
<dbReference type="PaxDb" id="44689-DDB0216600"/>
<dbReference type="EnsemblProtists" id="EAL73755">
    <property type="protein sequence ID" value="EAL73755"/>
    <property type="gene ID" value="DDB_G0268604"/>
</dbReference>
<dbReference type="GeneID" id="8616483"/>
<dbReference type="KEGG" id="ddi:DDB_G0268604"/>
<dbReference type="dictyBase" id="DDB_G0268604"/>
<dbReference type="HOGENOM" id="CLU_2890459_0_0_1"/>
<dbReference type="InParanoid" id="Q55F67"/>
<dbReference type="PRO" id="PR:Q55F67"/>
<dbReference type="Proteomes" id="UP000002195">
    <property type="component" value="Chromosome 1"/>
</dbReference>
<sequence length="63" mass="7480">MAIFNNISKNSLNIKSNNLIINQNFNQNLNHTQNNITRMYTSSKWVYVSFYYERNSCSLGSYY</sequence>